<proteinExistence type="inferred from homology"/>
<sequence length="299" mass="32407">MESIIEKAEILLEALPFIRNFRGKTFVIKYGGNAMDKADLRDAFAQDIIMLKYIGINPVIVHGGGPQIGQYLKKMGLESKFVGGLRVTDKETMDIVEMVLGGLVNKSIVQLINSYSGGHVKAVGITGKDGCLIKAKKLDAEEYFRSIGDYRPTELLDLGHVGEVEEVNPELLIHLDEDNYIPVIAPIGFDAEGNAYNINADFVAAAIAGALKAEKVLFLTDIEGLKDENGNTLSSATVSQINQMIKDGVIKGGMIPKVKACIQALEKGVNKAHILDGRLPHCILLEIFTKKGVGTEITL</sequence>
<gene>
    <name evidence="1" type="primary">argB</name>
    <name type="ordered locus">SYO3AOP1_0415</name>
</gene>
<name>ARGB_SULSY</name>
<protein>
    <recommendedName>
        <fullName evidence="1">Acetylglutamate kinase</fullName>
        <ecNumber evidence="1">2.7.2.8</ecNumber>
    </recommendedName>
    <alternativeName>
        <fullName evidence="1">N-acetyl-L-glutamate 5-phosphotransferase</fullName>
    </alternativeName>
    <alternativeName>
        <fullName evidence="1">NAG kinase</fullName>
        <shortName evidence="1">NAGK</shortName>
    </alternativeName>
</protein>
<comment type="function">
    <text evidence="1">Catalyzes the ATP-dependent phosphorylation of N-acetyl-L-glutamate.</text>
</comment>
<comment type="catalytic activity">
    <reaction evidence="1">
        <text>N-acetyl-L-glutamate + ATP = N-acetyl-L-glutamyl 5-phosphate + ADP</text>
        <dbReference type="Rhea" id="RHEA:14629"/>
        <dbReference type="ChEBI" id="CHEBI:30616"/>
        <dbReference type="ChEBI" id="CHEBI:44337"/>
        <dbReference type="ChEBI" id="CHEBI:57936"/>
        <dbReference type="ChEBI" id="CHEBI:456216"/>
        <dbReference type="EC" id="2.7.2.8"/>
    </reaction>
</comment>
<comment type="pathway">
    <text evidence="1">Amino-acid biosynthesis; L-arginine biosynthesis; N(2)-acetyl-L-ornithine from L-glutamate: step 2/4.</text>
</comment>
<comment type="subcellular location">
    <subcellularLocation>
        <location evidence="1">Cytoplasm</location>
    </subcellularLocation>
</comment>
<comment type="similarity">
    <text evidence="1">Belongs to the acetylglutamate kinase family. ArgB subfamily.</text>
</comment>
<reference key="1">
    <citation type="journal article" date="2009" name="J. Bacteriol.">
        <title>Complete and draft genome sequences of six members of the Aquificales.</title>
        <authorList>
            <person name="Reysenbach A.-L."/>
            <person name="Hamamura N."/>
            <person name="Podar M."/>
            <person name="Griffiths E."/>
            <person name="Ferreira S."/>
            <person name="Hochstein R."/>
            <person name="Heidelberg J."/>
            <person name="Johnson J."/>
            <person name="Mead D."/>
            <person name="Pohorille A."/>
            <person name="Sarmiento M."/>
            <person name="Schweighofer K."/>
            <person name="Seshadri R."/>
            <person name="Voytek M.A."/>
        </authorList>
    </citation>
    <scope>NUCLEOTIDE SEQUENCE [LARGE SCALE GENOMIC DNA]</scope>
    <source>
        <strain>YO3AOP1</strain>
    </source>
</reference>
<evidence type="ECO:0000255" key="1">
    <source>
        <dbReference type="HAMAP-Rule" id="MF_00082"/>
    </source>
</evidence>
<organism>
    <name type="scientific">Sulfurihydrogenibium sp. (strain YO3AOP1)</name>
    <dbReference type="NCBI Taxonomy" id="436114"/>
    <lineage>
        <taxon>Bacteria</taxon>
        <taxon>Pseudomonadati</taxon>
        <taxon>Aquificota</taxon>
        <taxon>Aquificia</taxon>
        <taxon>Aquificales</taxon>
        <taxon>Hydrogenothermaceae</taxon>
        <taxon>Sulfurihydrogenibium</taxon>
    </lineage>
</organism>
<keyword id="KW-0028">Amino-acid biosynthesis</keyword>
<keyword id="KW-0055">Arginine biosynthesis</keyword>
<keyword id="KW-0067">ATP-binding</keyword>
<keyword id="KW-0963">Cytoplasm</keyword>
<keyword id="KW-0418">Kinase</keyword>
<keyword id="KW-0547">Nucleotide-binding</keyword>
<keyword id="KW-0808">Transferase</keyword>
<dbReference type="EC" id="2.7.2.8" evidence="1"/>
<dbReference type="EMBL" id="CP001080">
    <property type="protein sequence ID" value="ACD66058.1"/>
    <property type="molecule type" value="Genomic_DNA"/>
</dbReference>
<dbReference type="RefSeq" id="WP_012459140.1">
    <property type="nucleotide sequence ID" value="NC_010730.1"/>
</dbReference>
<dbReference type="SMR" id="B2V7Y5"/>
<dbReference type="STRING" id="436114.SYO3AOP1_0415"/>
<dbReference type="KEGG" id="sul:SYO3AOP1_0415"/>
<dbReference type="eggNOG" id="COG0548">
    <property type="taxonomic scope" value="Bacteria"/>
</dbReference>
<dbReference type="HOGENOM" id="CLU_053680_0_0_0"/>
<dbReference type="UniPathway" id="UPA00068">
    <property type="reaction ID" value="UER00107"/>
</dbReference>
<dbReference type="GO" id="GO:0005737">
    <property type="term" value="C:cytoplasm"/>
    <property type="evidence" value="ECO:0007669"/>
    <property type="project" value="UniProtKB-SubCell"/>
</dbReference>
<dbReference type="GO" id="GO:0003991">
    <property type="term" value="F:acetylglutamate kinase activity"/>
    <property type="evidence" value="ECO:0007669"/>
    <property type="project" value="UniProtKB-UniRule"/>
</dbReference>
<dbReference type="GO" id="GO:0005524">
    <property type="term" value="F:ATP binding"/>
    <property type="evidence" value="ECO:0007669"/>
    <property type="project" value="UniProtKB-UniRule"/>
</dbReference>
<dbReference type="GO" id="GO:0042450">
    <property type="term" value="P:arginine biosynthetic process via ornithine"/>
    <property type="evidence" value="ECO:0007669"/>
    <property type="project" value="UniProtKB-UniRule"/>
</dbReference>
<dbReference type="GO" id="GO:0006526">
    <property type="term" value="P:L-arginine biosynthetic process"/>
    <property type="evidence" value="ECO:0007669"/>
    <property type="project" value="UniProtKB-UniPathway"/>
</dbReference>
<dbReference type="CDD" id="cd04250">
    <property type="entry name" value="AAK_NAGK-C"/>
    <property type="match status" value="1"/>
</dbReference>
<dbReference type="FunFam" id="3.40.1160.10:FF:000004">
    <property type="entry name" value="Acetylglutamate kinase"/>
    <property type="match status" value="1"/>
</dbReference>
<dbReference type="Gene3D" id="3.40.1160.10">
    <property type="entry name" value="Acetylglutamate kinase-like"/>
    <property type="match status" value="1"/>
</dbReference>
<dbReference type="HAMAP" id="MF_00082">
    <property type="entry name" value="ArgB"/>
    <property type="match status" value="1"/>
</dbReference>
<dbReference type="InterPro" id="IPR036393">
    <property type="entry name" value="AceGlu_kinase-like_sf"/>
</dbReference>
<dbReference type="InterPro" id="IPR004662">
    <property type="entry name" value="AcgluKinase_fam"/>
</dbReference>
<dbReference type="InterPro" id="IPR037528">
    <property type="entry name" value="ArgB"/>
</dbReference>
<dbReference type="InterPro" id="IPR001048">
    <property type="entry name" value="Asp/Glu/Uridylate_kinase"/>
</dbReference>
<dbReference type="InterPro" id="IPR001057">
    <property type="entry name" value="Glu/AcGlu_kinase"/>
</dbReference>
<dbReference type="InterPro" id="IPR041727">
    <property type="entry name" value="NAGK-C"/>
</dbReference>
<dbReference type="NCBIfam" id="TIGR00761">
    <property type="entry name" value="argB"/>
    <property type="match status" value="1"/>
</dbReference>
<dbReference type="PANTHER" id="PTHR23342">
    <property type="entry name" value="N-ACETYLGLUTAMATE SYNTHASE"/>
    <property type="match status" value="1"/>
</dbReference>
<dbReference type="PANTHER" id="PTHR23342:SF0">
    <property type="entry name" value="N-ACETYLGLUTAMATE SYNTHASE, MITOCHONDRIAL"/>
    <property type="match status" value="1"/>
</dbReference>
<dbReference type="Pfam" id="PF00696">
    <property type="entry name" value="AA_kinase"/>
    <property type="match status" value="1"/>
</dbReference>
<dbReference type="PIRSF" id="PIRSF000728">
    <property type="entry name" value="NAGK"/>
    <property type="match status" value="1"/>
</dbReference>
<dbReference type="PRINTS" id="PR00474">
    <property type="entry name" value="GLU5KINASE"/>
</dbReference>
<dbReference type="SUPFAM" id="SSF53633">
    <property type="entry name" value="Carbamate kinase-like"/>
    <property type="match status" value="1"/>
</dbReference>
<accession>B2V7Y5</accession>
<feature type="chain" id="PRO_1000117131" description="Acetylglutamate kinase">
    <location>
        <begin position="1"/>
        <end position="299"/>
    </location>
</feature>
<feature type="binding site" evidence="1">
    <location>
        <begin position="64"/>
        <end position="65"/>
    </location>
    <ligand>
        <name>substrate</name>
    </ligand>
</feature>
<feature type="binding site" evidence="1">
    <location>
        <position position="86"/>
    </location>
    <ligand>
        <name>substrate</name>
    </ligand>
</feature>
<feature type="binding site" evidence="1">
    <location>
        <position position="197"/>
    </location>
    <ligand>
        <name>substrate</name>
    </ligand>
</feature>
<feature type="site" description="Transition state stabilizer" evidence="1">
    <location>
        <position position="29"/>
    </location>
</feature>
<feature type="site" description="Transition state stabilizer" evidence="1">
    <location>
        <position position="257"/>
    </location>
</feature>